<sequence length="171" mass="18784">MNKANSFNKEELIACGHGKLFGPNSPRLPVDNMLMMDRIVTINDNGGEFGKGEIVAELDINPDLWFFDCHFITDPVMPGCLGLDAMWQLVGFYLGWEGAEGKGRALGVGEVKFTGQVLPGAKKVTYKLNIKRTIHRKLVMGIADAILEVDGRQIYSATDLKVGVFSDTSTF</sequence>
<organism>
    <name type="scientific">Shewanella baltica (strain OS223)</name>
    <dbReference type="NCBI Taxonomy" id="407976"/>
    <lineage>
        <taxon>Bacteria</taxon>
        <taxon>Pseudomonadati</taxon>
        <taxon>Pseudomonadota</taxon>
        <taxon>Gammaproteobacteria</taxon>
        <taxon>Alteromonadales</taxon>
        <taxon>Shewanellaceae</taxon>
        <taxon>Shewanella</taxon>
    </lineage>
</organism>
<accession>B8E711</accession>
<name>FABA_SHEB2</name>
<proteinExistence type="inferred from homology"/>
<protein>
    <recommendedName>
        <fullName evidence="1">3-hydroxydecanoyl-[acyl-carrier-protein] dehydratase</fullName>
        <ecNumber evidence="1">4.2.1.59</ecNumber>
    </recommendedName>
    <alternativeName>
        <fullName evidence="1">3-hydroxyacyl-[acyl-carrier-protein] dehydratase FabA</fullName>
    </alternativeName>
    <alternativeName>
        <fullName evidence="1">Beta-hydroxydecanoyl thioester dehydrase</fullName>
    </alternativeName>
    <alternativeName>
        <fullName evidence="1">Trans-2-decenoyl-[acyl-carrier-protein] isomerase</fullName>
        <ecNumber evidence="1">5.3.3.14</ecNumber>
    </alternativeName>
</protein>
<feature type="chain" id="PRO_1000201211" description="3-hydroxydecanoyl-[acyl-carrier-protein] dehydratase">
    <location>
        <begin position="1"/>
        <end position="171"/>
    </location>
</feature>
<feature type="active site" evidence="1">
    <location>
        <position position="70"/>
    </location>
</feature>
<dbReference type="EC" id="4.2.1.59" evidence="1"/>
<dbReference type="EC" id="5.3.3.14" evidence="1"/>
<dbReference type="EMBL" id="CP001252">
    <property type="protein sequence ID" value="ACK46284.1"/>
    <property type="molecule type" value="Genomic_DNA"/>
</dbReference>
<dbReference type="RefSeq" id="WP_006082073.1">
    <property type="nucleotide sequence ID" value="NC_011663.1"/>
</dbReference>
<dbReference type="SMR" id="B8E711"/>
<dbReference type="GeneID" id="11772774"/>
<dbReference type="KEGG" id="sbp:Sbal223_1779"/>
<dbReference type="HOGENOM" id="CLU_097925_0_0_6"/>
<dbReference type="UniPathway" id="UPA00094"/>
<dbReference type="Proteomes" id="UP000002507">
    <property type="component" value="Chromosome"/>
</dbReference>
<dbReference type="GO" id="GO:0005737">
    <property type="term" value="C:cytoplasm"/>
    <property type="evidence" value="ECO:0007669"/>
    <property type="project" value="UniProtKB-SubCell"/>
</dbReference>
<dbReference type="GO" id="GO:0019171">
    <property type="term" value="F:(3R)-hydroxyacyl-[acyl-carrier-protein] dehydratase activity"/>
    <property type="evidence" value="ECO:0007669"/>
    <property type="project" value="UniProtKB-UniRule"/>
</dbReference>
<dbReference type="GO" id="GO:0034017">
    <property type="term" value="F:trans-2-decenoyl-acyl-carrier-protein isomerase activity"/>
    <property type="evidence" value="ECO:0007669"/>
    <property type="project" value="UniProtKB-UniRule"/>
</dbReference>
<dbReference type="GO" id="GO:0006636">
    <property type="term" value="P:unsaturated fatty acid biosynthetic process"/>
    <property type="evidence" value="ECO:0007669"/>
    <property type="project" value="UniProtKB-UniRule"/>
</dbReference>
<dbReference type="CDD" id="cd01287">
    <property type="entry name" value="FabA"/>
    <property type="match status" value="1"/>
</dbReference>
<dbReference type="Gene3D" id="3.10.129.10">
    <property type="entry name" value="Hotdog Thioesterase"/>
    <property type="match status" value="1"/>
</dbReference>
<dbReference type="HAMAP" id="MF_00405">
    <property type="entry name" value="FabA"/>
    <property type="match status" value="1"/>
</dbReference>
<dbReference type="InterPro" id="IPR010083">
    <property type="entry name" value="FabA"/>
</dbReference>
<dbReference type="InterPro" id="IPR013114">
    <property type="entry name" value="FabA_FabZ"/>
</dbReference>
<dbReference type="InterPro" id="IPR029069">
    <property type="entry name" value="HotDog_dom_sf"/>
</dbReference>
<dbReference type="NCBIfam" id="TIGR01749">
    <property type="entry name" value="fabA"/>
    <property type="match status" value="1"/>
</dbReference>
<dbReference type="NCBIfam" id="NF003509">
    <property type="entry name" value="PRK05174.1"/>
    <property type="match status" value="1"/>
</dbReference>
<dbReference type="PANTHER" id="PTHR30272">
    <property type="entry name" value="3-HYDROXYACYL-[ACYL-CARRIER-PROTEIN] DEHYDRATASE"/>
    <property type="match status" value="1"/>
</dbReference>
<dbReference type="PANTHER" id="PTHR30272:SF8">
    <property type="entry name" value="3-HYDROXYDECANOYL-[ACYL-CARRIER-PROTEIN] DEHYDRATASE"/>
    <property type="match status" value="1"/>
</dbReference>
<dbReference type="Pfam" id="PF07977">
    <property type="entry name" value="FabA"/>
    <property type="match status" value="1"/>
</dbReference>
<dbReference type="SUPFAM" id="SSF54637">
    <property type="entry name" value="Thioesterase/thiol ester dehydrase-isomerase"/>
    <property type="match status" value="1"/>
</dbReference>
<reference key="1">
    <citation type="submission" date="2008-12" db="EMBL/GenBank/DDBJ databases">
        <title>Complete sequence of chromosome of Shewanella baltica OS223.</title>
        <authorList>
            <consortium name="US DOE Joint Genome Institute"/>
            <person name="Lucas S."/>
            <person name="Copeland A."/>
            <person name="Lapidus A."/>
            <person name="Glavina del Rio T."/>
            <person name="Dalin E."/>
            <person name="Tice H."/>
            <person name="Bruce D."/>
            <person name="Goodwin L."/>
            <person name="Pitluck S."/>
            <person name="Chertkov O."/>
            <person name="Meincke L."/>
            <person name="Brettin T."/>
            <person name="Detter J.C."/>
            <person name="Han C."/>
            <person name="Kuske C.R."/>
            <person name="Larimer F."/>
            <person name="Land M."/>
            <person name="Hauser L."/>
            <person name="Kyrpides N."/>
            <person name="Ovchinnikova G."/>
            <person name="Brettar I."/>
            <person name="Rodrigues J."/>
            <person name="Konstantinidis K."/>
            <person name="Tiedje J."/>
        </authorList>
    </citation>
    <scope>NUCLEOTIDE SEQUENCE [LARGE SCALE GENOMIC DNA]</scope>
    <source>
        <strain>OS223</strain>
    </source>
</reference>
<gene>
    <name evidence="1" type="primary">fabA</name>
    <name type="ordered locus">Sbal223_1779</name>
</gene>
<keyword id="KW-0963">Cytoplasm</keyword>
<keyword id="KW-0275">Fatty acid biosynthesis</keyword>
<keyword id="KW-0276">Fatty acid metabolism</keyword>
<keyword id="KW-0413">Isomerase</keyword>
<keyword id="KW-0444">Lipid biosynthesis</keyword>
<keyword id="KW-0443">Lipid metabolism</keyword>
<keyword id="KW-0456">Lyase</keyword>
<evidence type="ECO:0000255" key="1">
    <source>
        <dbReference type="HAMAP-Rule" id="MF_00405"/>
    </source>
</evidence>
<comment type="function">
    <text evidence="1">Necessary for the introduction of cis unsaturation into fatty acids. Catalyzes the dehydration of (3R)-3-hydroxydecanoyl-ACP to E-(2)-decenoyl-ACP and then its isomerization to Z-(3)-decenoyl-ACP. Can catalyze the dehydratase reaction for beta-hydroxyacyl-ACPs with saturated chain lengths up to 16:0, being most active on intermediate chain length.</text>
</comment>
<comment type="catalytic activity">
    <reaction evidence="1">
        <text>a (3R)-hydroxyacyl-[ACP] = a (2E)-enoyl-[ACP] + H2O</text>
        <dbReference type="Rhea" id="RHEA:13097"/>
        <dbReference type="Rhea" id="RHEA-COMP:9925"/>
        <dbReference type="Rhea" id="RHEA-COMP:9945"/>
        <dbReference type="ChEBI" id="CHEBI:15377"/>
        <dbReference type="ChEBI" id="CHEBI:78784"/>
        <dbReference type="ChEBI" id="CHEBI:78827"/>
        <dbReference type="EC" id="4.2.1.59"/>
    </reaction>
</comment>
<comment type="catalytic activity">
    <reaction evidence="1">
        <text>(3R)-hydroxydecanoyl-[ACP] = (2E)-decenoyl-[ACP] + H2O</text>
        <dbReference type="Rhea" id="RHEA:41860"/>
        <dbReference type="Rhea" id="RHEA-COMP:9638"/>
        <dbReference type="Rhea" id="RHEA-COMP:9639"/>
        <dbReference type="ChEBI" id="CHEBI:15377"/>
        <dbReference type="ChEBI" id="CHEBI:78466"/>
        <dbReference type="ChEBI" id="CHEBI:78467"/>
    </reaction>
</comment>
<comment type="catalytic activity">
    <reaction evidence="1">
        <text>(2E)-decenoyl-[ACP] = (3Z)-decenoyl-[ACP]</text>
        <dbReference type="Rhea" id="RHEA:23568"/>
        <dbReference type="Rhea" id="RHEA-COMP:9639"/>
        <dbReference type="Rhea" id="RHEA-COMP:9927"/>
        <dbReference type="ChEBI" id="CHEBI:78467"/>
        <dbReference type="ChEBI" id="CHEBI:78798"/>
        <dbReference type="EC" id="5.3.3.14"/>
    </reaction>
</comment>
<comment type="pathway">
    <text evidence="1">Lipid metabolism; fatty acid biosynthesis.</text>
</comment>
<comment type="subunit">
    <text evidence="1">Homodimer.</text>
</comment>
<comment type="subcellular location">
    <subcellularLocation>
        <location evidence="1">Cytoplasm</location>
    </subcellularLocation>
</comment>
<comment type="similarity">
    <text evidence="1">Belongs to the thioester dehydratase family. FabA subfamily.</text>
</comment>